<sequence length="311" mass="34265">MKILKIATRKSALALWQSEHIKARLMAQHAGLQVELVGMKTKGDVILDTPLAKIGGKGLFTKELEDSMLSGQTHIAVHSLKDVPVAFLDGLVLAAICSREDVRDAMISQRYVKFDDLPQSAKVGTTSLRRKMQLLRMRPDLNIISLRGNVQTRLRKLKEGEFDAIILAMAGINRLNLADEVAHIYPFDIAQMTPAMGQGALGVEAVDDAQILEKIKFLNDERSVIETRVERDFVTLLEGGCQVPIGINARLASEEIEINAIVGLPDGSEVITENLTAKKSEFESVGKELAREFIARGAKELLKRAEEMANL</sequence>
<dbReference type="EC" id="2.5.1.61" evidence="1"/>
<dbReference type="EMBL" id="CP000767">
    <property type="protein sequence ID" value="EAT99953.1"/>
    <property type="molecule type" value="Genomic_DNA"/>
</dbReference>
<dbReference type="RefSeq" id="WP_011992374.1">
    <property type="nucleotide sequence ID" value="NC_009715.2"/>
</dbReference>
<dbReference type="SMR" id="A7GYU4"/>
<dbReference type="STRING" id="360105.CCV52592_0767"/>
<dbReference type="KEGG" id="ccv:CCV52592_0767"/>
<dbReference type="HOGENOM" id="CLU_019704_1_0_7"/>
<dbReference type="OrthoDB" id="9810298at2"/>
<dbReference type="UniPathway" id="UPA00251">
    <property type="reaction ID" value="UER00319"/>
</dbReference>
<dbReference type="Proteomes" id="UP000006380">
    <property type="component" value="Chromosome"/>
</dbReference>
<dbReference type="GO" id="GO:0005737">
    <property type="term" value="C:cytoplasm"/>
    <property type="evidence" value="ECO:0007669"/>
    <property type="project" value="TreeGrafter"/>
</dbReference>
<dbReference type="GO" id="GO:0004418">
    <property type="term" value="F:hydroxymethylbilane synthase activity"/>
    <property type="evidence" value="ECO:0007669"/>
    <property type="project" value="UniProtKB-UniRule"/>
</dbReference>
<dbReference type="GO" id="GO:0006782">
    <property type="term" value="P:protoporphyrinogen IX biosynthetic process"/>
    <property type="evidence" value="ECO:0007669"/>
    <property type="project" value="UniProtKB-UniRule"/>
</dbReference>
<dbReference type="CDD" id="cd13646">
    <property type="entry name" value="PBP2_EcHMBS_like"/>
    <property type="match status" value="1"/>
</dbReference>
<dbReference type="FunFam" id="3.40.190.10:FF:000004">
    <property type="entry name" value="Porphobilinogen deaminase"/>
    <property type="match status" value="1"/>
</dbReference>
<dbReference type="FunFam" id="3.40.190.10:FF:000005">
    <property type="entry name" value="Porphobilinogen deaminase"/>
    <property type="match status" value="1"/>
</dbReference>
<dbReference type="Gene3D" id="3.40.190.10">
    <property type="entry name" value="Periplasmic binding protein-like II"/>
    <property type="match status" value="2"/>
</dbReference>
<dbReference type="Gene3D" id="3.30.160.40">
    <property type="entry name" value="Porphobilinogen deaminase, C-terminal domain"/>
    <property type="match status" value="1"/>
</dbReference>
<dbReference type="HAMAP" id="MF_00260">
    <property type="entry name" value="Porphobil_deam"/>
    <property type="match status" value="1"/>
</dbReference>
<dbReference type="InterPro" id="IPR000860">
    <property type="entry name" value="HemC"/>
</dbReference>
<dbReference type="InterPro" id="IPR022419">
    <property type="entry name" value="Porphobilin_deaminase_cofac_BS"/>
</dbReference>
<dbReference type="InterPro" id="IPR022417">
    <property type="entry name" value="Porphobilin_deaminase_N"/>
</dbReference>
<dbReference type="InterPro" id="IPR022418">
    <property type="entry name" value="Porphobilinogen_deaminase_C"/>
</dbReference>
<dbReference type="InterPro" id="IPR036803">
    <property type="entry name" value="Porphobilinogen_deaminase_C_sf"/>
</dbReference>
<dbReference type="NCBIfam" id="TIGR00212">
    <property type="entry name" value="hemC"/>
    <property type="match status" value="1"/>
</dbReference>
<dbReference type="PANTHER" id="PTHR11557">
    <property type="entry name" value="PORPHOBILINOGEN DEAMINASE"/>
    <property type="match status" value="1"/>
</dbReference>
<dbReference type="PANTHER" id="PTHR11557:SF0">
    <property type="entry name" value="PORPHOBILINOGEN DEAMINASE"/>
    <property type="match status" value="1"/>
</dbReference>
<dbReference type="Pfam" id="PF01379">
    <property type="entry name" value="Porphobil_deam"/>
    <property type="match status" value="1"/>
</dbReference>
<dbReference type="Pfam" id="PF03900">
    <property type="entry name" value="Porphobil_deamC"/>
    <property type="match status" value="1"/>
</dbReference>
<dbReference type="PIRSF" id="PIRSF001438">
    <property type="entry name" value="4pyrrol_synth_OHMeBilane_synth"/>
    <property type="match status" value="1"/>
</dbReference>
<dbReference type="PRINTS" id="PR00151">
    <property type="entry name" value="PORPHBDMNASE"/>
</dbReference>
<dbReference type="SUPFAM" id="SSF53850">
    <property type="entry name" value="Periplasmic binding protein-like II"/>
    <property type="match status" value="1"/>
</dbReference>
<dbReference type="SUPFAM" id="SSF54782">
    <property type="entry name" value="Porphobilinogen deaminase (hydroxymethylbilane synthase), C-terminal domain"/>
    <property type="match status" value="1"/>
</dbReference>
<dbReference type="PROSITE" id="PS00533">
    <property type="entry name" value="PORPHOBILINOGEN_DEAM"/>
    <property type="match status" value="1"/>
</dbReference>
<name>HEM3_CAMC5</name>
<reference key="1">
    <citation type="submission" date="2007-07" db="EMBL/GenBank/DDBJ databases">
        <title>Genome sequence of Campylobacter curvus 525.92 isolated from human feces.</title>
        <authorList>
            <person name="Fouts D.E."/>
            <person name="Mongodin E.F."/>
            <person name="Puiu D."/>
            <person name="Sebastian Y."/>
            <person name="Miller W.G."/>
            <person name="Mandrell R.E."/>
            <person name="Lastovica A.J."/>
            <person name="Nelson K.E."/>
        </authorList>
    </citation>
    <scope>NUCLEOTIDE SEQUENCE [LARGE SCALE GENOMIC DNA]</scope>
    <source>
        <strain>525.92</strain>
    </source>
</reference>
<feature type="chain" id="PRO_1000204646" description="Porphobilinogen deaminase">
    <location>
        <begin position="1"/>
        <end position="311"/>
    </location>
</feature>
<feature type="modified residue" description="S-(dipyrrolylmethanemethyl)cysteine" evidence="1">
    <location>
        <position position="241"/>
    </location>
</feature>
<protein>
    <recommendedName>
        <fullName evidence="1">Porphobilinogen deaminase</fullName>
        <shortName evidence="1">PBG</shortName>
        <ecNumber evidence="1">2.5.1.61</ecNumber>
    </recommendedName>
    <alternativeName>
        <fullName evidence="1">Hydroxymethylbilane synthase</fullName>
        <shortName evidence="1">HMBS</shortName>
    </alternativeName>
    <alternativeName>
        <fullName evidence="1">Pre-uroporphyrinogen synthase</fullName>
    </alternativeName>
</protein>
<accession>A7GYU4</accession>
<proteinExistence type="inferred from homology"/>
<gene>
    <name evidence="1" type="primary">hemC</name>
    <name type="ordered locus">Ccur92_10820</name>
    <name type="ORF">CCV52592_0767</name>
</gene>
<comment type="function">
    <text evidence="1">Tetrapolymerization of the monopyrrole PBG into the hydroxymethylbilane pre-uroporphyrinogen in several discrete steps.</text>
</comment>
<comment type="catalytic activity">
    <reaction evidence="1">
        <text>4 porphobilinogen + H2O = hydroxymethylbilane + 4 NH4(+)</text>
        <dbReference type="Rhea" id="RHEA:13185"/>
        <dbReference type="ChEBI" id="CHEBI:15377"/>
        <dbReference type="ChEBI" id="CHEBI:28938"/>
        <dbReference type="ChEBI" id="CHEBI:57845"/>
        <dbReference type="ChEBI" id="CHEBI:58126"/>
        <dbReference type="EC" id="2.5.1.61"/>
    </reaction>
</comment>
<comment type="cofactor">
    <cofactor evidence="1">
        <name>dipyrromethane</name>
        <dbReference type="ChEBI" id="CHEBI:60342"/>
    </cofactor>
    <text evidence="1">Binds 1 dipyrromethane group covalently.</text>
</comment>
<comment type="pathway">
    <text evidence="1">Porphyrin-containing compound metabolism; protoporphyrin-IX biosynthesis; coproporphyrinogen-III from 5-aminolevulinate: step 2/4.</text>
</comment>
<comment type="subunit">
    <text evidence="1">Monomer.</text>
</comment>
<comment type="miscellaneous">
    <text evidence="1">The porphobilinogen subunits are added to the dipyrromethane group.</text>
</comment>
<comment type="similarity">
    <text evidence="1">Belongs to the HMBS family.</text>
</comment>
<organism>
    <name type="scientific">Campylobacter curvus (strain 525.92)</name>
    <dbReference type="NCBI Taxonomy" id="360105"/>
    <lineage>
        <taxon>Bacteria</taxon>
        <taxon>Pseudomonadati</taxon>
        <taxon>Campylobacterota</taxon>
        <taxon>Epsilonproteobacteria</taxon>
        <taxon>Campylobacterales</taxon>
        <taxon>Campylobacteraceae</taxon>
        <taxon>Campylobacter</taxon>
    </lineage>
</organism>
<evidence type="ECO:0000255" key="1">
    <source>
        <dbReference type="HAMAP-Rule" id="MF_00260"/>
    </source>
</evidence>
<keyword id="KW-0627">Porphyrin biosynthesis</keyword>
<keyword id="KW-1185">Reference proteome</keyword>
<keyword id="KW-0808">Transferase</keyword>